<comment type="developmental stage">
    <text evidence="2">Highly expressed 2 days after pollination and then rapidly decreases to basal level.</text>
</comment>
<comment type="similarity">
    <text evidence="3">Belongs to the CDI family. ICK/KRP subfamily.</text>
</comment>
<comment type="sequence caution" evidence="3">
    <conflict type="erroneous gene model prediction">
        <sequence resource="EMBL-CDS" id="ABA94861"/>
    </conflict>
</comment>
<comment type="sequence caution" evidence="3">
    <conflict type="erroneous gene model prediction">
        <sequence resource="EMBL-CDS" id="BAF28634"/>
    </conflict>
</comment>
<accession>Q2R185</accession>
<accession>Q283L2</accession>
<feature type="chain" id="PRO_0000295666" description="Cyclin-dependent kinase inhibitor 3">
    <location>
        <begin position="1"/>
        <end position="225"/>
    </location>
</feature>
<feature type="region of interest" description="Disordered" evidence="1">
    <location>
        <begin position="47"/>
        <end position="94"/>
    </location>
</feature>
<feature type="region of interest" description="Disordered" evidence="1">
    <location>
        <begin position="130"/>
        <end position="169"/>
    </location>
</feature>
<feature type="compositionally biased region" description="Basic residues" evidence="1">
    <location>
        <begin position="55"/>
        <end position="67"/>
    </location>
</feature>
<feature type="compositionally biased region" description="Low complexity" evidence="1">
    <location>
        <begin position="71"/>
        <end position="82"/>
    </location>
</feature>
<feature type="compositionally biased region" description="Basic and acidic residues" evidence="1">
    <location>
        <begin position="143"/>
        <end position="153"/>
    </location>
</feature>
<protein>
    <recommendedName>
        <fullName>Cyclin-dependent kinase inhibitor 3</fullName>
    </recommendedName>
    <alternativeName>
        <fullName>KIP-related protein 3</fullName>
    </alternativeName>
</protein>
<sequence length="225" mass="23719">MGKYLRSSCKQQQQPSSPAAVASVAAAAVSSYSYLTLRSGRRVPAAAAAAGGSACRRRHRRGGRRGCAKNGAGSARACGARSPTSSASSGQRRRCEAVECSHGGGRAELSRSPPLGNSVVVVSGDVVSGERKSLKPNSCSREVAAEHAGEHKHNPAAAAAAGRRPPLSPPEAEIEAFFAAAELAERRRFAEKYNYDIALDRPLQGRYEWEPTVPNFDVAKDVTDM</sequence>
<gene>
    <name type="primary">KRP3</name>
    <name type="ordered locus">Os11g0614800</name>
    <name type="ordered locus">LOC_Os11g40030</name>
</gene>
<keyword id="KW-0649">Protein kinase inhibitor</keyword>
<keyword id="KW-1185">Reference proteome</keyword>
<name>KRP3_ORYSJ</name>
<proteinExistence type="evidence at transcript level"/>
<organism>
    <name type="scientific">Oryza sativa subsp. japonica</name>
    <name type="common">Rice</name>
    <dbReference type="NCBI Taxonomy" id="39947"/>
    <lineage>
        <taxon>Eukaryota</taxon>
        <taxon>Viridiplantae</taxon>
        <taxon>Streptophyta</taxon>
        <taxon>Embryophyta</taxon>
        <taxon>Tracheophyta</taxon>
        <taxon>Spermatophyta</taxon>
        <taxon>Magnoliopsida</taxon>
        <taxon>Liliopsida</taxon>
        <taxon>Poales</taxon>
        <taxon>Poaceae</taxon>
        <taxon>BOP clade</taxon>
        <taxon>Oryzoideae</taxon>
        <taxon>Oryzeae</taxon>
        <taxon>Oryzinae</taxon>
        <taxon>Oryza</taxon>
        <taxon>Oryza sativa</taxon>
    </lineage>
</organism>
<evidence type="ECO:0000256" key="1">
    <source>
        <dbReference type="SAM" id="MobiDB-lite"/>
    </source>
</evidence>
<evidence type="ECO:0000269" key="2">
    <source>
    </source>
</evidence>
<evidence type="ECO:0000305" key="3"/>
<dbReference type="EMBL" id="DQ229364">
    <property type="protein sequence ID" value="ABB70060.1"/>
    <property type="molecule type" value="mRNA"/>
</dbReference>
<dbReference type="EMBL" id="DP000010">
    <property type="protein sequence ID" value="ABA94861.1"/>
    <property type="status" value="ALT_SEQ"/>
    <property type="molecule type" value="Genomic_DNA"/>
</dbReference>
<dbReference type="EMBL" id="AP008217">
    <property type="protein sequence ID" value="BAF28634.1"/>
    <property type="status" value="ALT_SEQ"/>
    <property type="molecule type" value="Genomic_DNA"/>
</dbReference>
<dbReference type="EMBL" id="AP014967">
    <property type="status" value="NOT_ANNOTATED_CDS"/>
    <property type="molecule type" value="Genomic_DNA"/>
</dbReference>
<dbReference type="RefSeq" id="XP_015616530.1">
    <property type="nucleotide sequence ID" value="XM_015761044.1"/>
</dbReference>
<dbReference type="FunCoup" id="Q2R185">
    <property type="interactions" value="6"/>
</dbReference>
<dbReference type="STRING" id="39947.Q2R185"/>
<dbReference type="PaxDb" id="39947-Q2R185"/>
<dbReference type="EnsemblPlants" id="Os11t0614800-02">
    <property type="protein sequence ID" value="Os11t0614800-02"/>
    <property type="gene ID" value="Os11g0614800"/>
</dbReference>
<dbReference type="Gramene" id="Os11t0614800-02">
    <property type="protein sequence ID" value="Os11t0614800-02"/>
    <property type="gene ID" value="Os11g0614800"/>
</dbReference>
<dbReference type="KEGG" id="dosa:Os11g0614800"/>
<dbReference type="eggNOG" id="ENOG502S5ZH">
    <property type="taxonomic scope" value="Eukaryota"/>
</dbReference>
<dbReference type="InParanoid" id="Q2R185"/>
<dbReference type="OrthoDB" id="9940972at2759"/>
<dbReference type="PlantReactome" id="R-OSA-9630286">
    <property type="pathway name" value="Cell cycle regulation"/>
</dbReference>
<dbReference type="PlantReactome" id="R-OSA-9640760">
    <property type="pathway name" value="G1 phase"/>
</dbReference>
<dbReference type="Proteomes" id="UP000000763">
    <property type="component" value="Chromosome 11"/>
</dbReference>
<dbReference type="Proteomes" id="UP000059680">
    <property type="component" value="Chromosome 11"/>
</dbReference>
<dbReference type="GO" id="GO:0005634">
    <property type="term" value="C:nucleus"/>
    <property type="evidence" value="ECO:0007669"/>
    <property type="project" value="InterPro"/>
</dbReference>
<dbReference type="GO" id="GO:0004861">
    <property type="term" value="F:cyclin-dependent protein serine/threonine kinase inhibitor activity"/>
    <property type="evidence" value="ECO:0007669"/>
    <property type="project" value="InterPro"/>
</dbReference>
<dbReference type="GO" id="GO:0051726">
    <property type="term" value="P:regulation of cell cycle"/>
    <property type="evidence" value="ECO:0007669"/>
    <property type="project" value="InterPro"/>
</dbReference>
<dbReference type="Gene3D" id="4.10.365.10">
    <property type="entry name" value="p27"/>
    <property type="match status" value="1"/>
</dbReference>
<dbReference type="InterPro" id="IPR003175">
    <property type="entry name" value="CDI_dom"/>
</dbReference>
<dbReference type="InterPro" id="IPR044898">
    <property type="entry name" value="CDI_dom_sf"/>
</dbReference>
<dbReference type="InterPro" id="IPR044275">
    <property type="entry name" value="KRP"/>
</dbReference>
<dbReference type="PANTHER" id="PTHR46776">
    <property type="entry name" value="CYCLIN-DEPENDENT KINASE INHIBITOR 4-RELATED"/>
    <property type="match status" value="1"/>
</dbReference>
<dbReference type="Pfam" id="PF02234">
    <property type="entry name" value="CDI"/>
    <property type="match status" value="1"/>
</dbReference>
<reference key="1">
    <citation type="journal article" date="2006" name="Plant Physiol.">
        <title>The cyclin-dependent kinase inhibitor Orysa;KRP1 plays an important role in seed development of rice.</title>
        <authorList>
            <person name="Barroco R.M."/>
            <person name="Peres A."/>
            <person name="Droual A.-M."/>
            <person name="de Veylder L."/>
            <person name="Nguyen L.S.L."/>
            <person name="de Wolf J."/>
            <person name="Mironov V."/>
            <person name="Peerbolte R."/>
            <person name="Beemster G.T.S."/>
            <person name="Inze D."/>
            <person name="Broekaert W.F."/>
            <person name="Frankard V."/>
        </authorList>
    </citation>
    <scope>NUCLEOTIDE SEQUENCE [MRNA]</scope>
    <scope>DEVELOPMENTAL STAGE</scope>
</reference>
<reference key="2">
    <citation type="journal article" date="2005" name="BMC Biol.">
        <title>The sequence of rice chromosomes 11 and 12, rich in disease resistance genes and recent gene duplications.</title>
        <authorList>
            <consortium name="The rice chromosomes 11 and 12 sequencing consortia"/>
        </authorList>
    </citation>
    <scope>NUCLEOTIDE SEQUENCE [LARGE SCALE GENOMIC DNA]</scope>
    <source>
        <strain>cv. Nipponbare</strain>
    </source>
</reference>
<reference key="3">
    <citation type="journal article" date="2005" name="Nature">
        <title>The map-based sequence of the rice genome.</title>
        <authorList>
            <consortium name="International rice genome sequencing project (IRGSP)"/>
        </authorList>
    </citation>
    <scope>NUCLEOTIDE SEQUENCE [LARGE SCALE GENOMIC DNA]</scope>
    <source>
        <strain>cv. Nipponbare</strain>
    </source>
</reference>
<reference key="4">
    <citation type="journal article" date="2008" name="Nucleic Acids Res.">
        <title>The rice annotation project database (RAP-DB): 2008 update.</title>
        <authorList>
            <consortium name="The rice annotation project (RAP)"/>
        </authorList>
    </citation>
    <scope>GENOME REANNOTATION</scope>
    <source>
        <strain>cv. Nipponbare</strain>
    </source>
</reference>
<reference key="5">
    <citation type="journal article" date="2013" name="Rice">
        <title>Improvement of the Oryza sativa Nipponbare reference genome using next generation sequence and optical map data.</title>
        <authorList>
            <person name="Kawahara Y."/>
            <person name="de la Bastide M."/>
            <person name="Hamilton J.P."/>
            <person name="Kanamori H."/>
            <person name="McCombie W.R."/>
            <person name="Ouyang S."/>
            <person name="Schwartz D.C."/>
            <person name="Tanaka T."/>
            <person name="Wu J."/>
            <person name="Zhou S."/>
            <person name="Childs K.L."/>
            <person name="Davidson R.M."/>
            <person name="Lin H."/>
            <person name="Quesada-Ocampo L."/>
            <person name="Vaillancourt B."/>
            <person name="Sakai H."/>
            <person name="Lee S.S."/>
            <person name="Kim J."/>
            <person name="Numa H."/>
            <person name="Itoh T."/>
            <person name="Buell C.R."/>
            <person name="Matsumoto T."/>
        </authorList>
    </citation>
    <scope>GENOME REANNOTATION</scope>
    <source>
        <strain>cv. Nipponbare</strain>
    </source>
</reference>
<reference key="6">
    <citation type="journal article" date="2007" name="Plant Mol. Biol.">
        <title>Genome-wide identification and expression analysis of rice cell cycle genes.</title>
        <authorList>
            <person name="Guo J."/>
            <person name="Song J."/>
            <person name="Wang F."/>
            <person name="Zhang X.S."/>
        </authorList>
    </citation>
    <scope>GENE FAMILY</scope>
</reference>